<protein>
    <recommendedName>
        <fullName>Aminoacyltransferase FemA</fullName>
        <ecNumber>2.3.2.17</ecNumber>
    </recommendedName>
    <alternativeName>
        <fullName>Factor essential for expression of methicillin resistance A</fullName>
    </alternativeName>
    <alternativeName>
        <fullName>N-acetylmuramoyl-L-alanyl-D-glutamyl-L-lysyl-(N6-glycyl)-D-alanyl-D-alanine-diphosphoundecaprenyl-N-acetylglucosamine:glycine glycyltransferase</fullName>
    </alternativeName>
</protein>
<comment type="function">
    <text>Catalyzes the formation of the pentaglycine interpeptide bridge, which is characteristic of the S.aureus peptidoglycan. Adds glycines 2 and 3 of the pentaglycine bridge, using glycyl-tRNA(Gly) as donor.</text>
</comment>
<comment type="catalytic activity">
    <reaction>
        <text>beta-D-GlcNAc-(1-&gt;4)-Mur2Ac(oyl-L-Ala-D-isoglutaminyl-L-Lys-(N(6)-Gly)-D-Ala-D-Ala)-di-trans,octa-cis-undecaprenyl diphosphate + 2 glycyl-tRNA(Gly) = MurNAc-L-Ala-D-isoglutaminyl-L-Lys-(N(6)-tri-Gly)-D-Ala-D-Ala-diphospho-di-trans,octa-cis-undecaprenyl-GlcNAc + 2 tRNA(Gly) + 2 H(+)</text>
        <dbReference type="Rhea" id="RHEA:30439"/>
        <dbReference type="Rhea" id="RHEA-COMP:9664"/>
        <dbReference type="Rhea" id="RHEA-COMP:9683"/>
        <dbReference type="ChEBI" id="CHEBI:15378"/>
        <dbReference type="ChEBI" id="CHEBI:62234"/>
        <dbReference type="ChEBI" id="CHEBI:62235"/>
        <dbReference type="ChEBI" id="CHEBI:78442"/>
        <dbReference type="ChEBI" id="CHEBI:78522"/>
        <dbReference type="EC" id="2.3.2.17"/>
    </reaction>
</comment>
<comment type="subunit">
    <text evidence="1">Homodimer. Interacts with FemB (By similarity).</text>
</comment>
<comment type="subcellular location">
    <subcellularLocation>
        <location evidence="2">Cytoplasm</location>
    </subcellularLocation>
</comment>
<comment type="miscellaneous">
    <text>Since cross-linking between the peptide strands is critical for maintaining stability of the cell wall, FemA is a potential target for the development of new antibacterial agents.</text>
</comment>
<comment type="similarity">
    <text evidence="3">Belongs to the FemABX family.</text>
</comment>
<comment type="sequence caution" evidence="3">
    <conflict type="erroneous initiation">
        <sequence resource="EMBL-CDS" id="CAA35679"/>
    </conflict>
</comment>
<gene>
    <name type="primary">femA</name>
</gene>
<reference key="1">
    <citation type="journal article" date="1989" name="Mol. Gen. Genet.">
        <title>FemA, a host-mediated factor essential for methicillin resistance in Staphylococcus aureus: molecular cloning and characterization.</title>
        <authorList>
            <person name="Berger-Baechi B."/>
            <person name="Barberis-Maino L."/>
            <person name="Straessle A."/>
            <person name="Kayser F.H."/>
        </authorList>
    </citation>
    <scope>NUCLEOTIDE SEQUENCE [GENOMIC DNA]</scope>
</reference>
<reference key="2">
    <citation type="journal article" date="1995" name="FEMS Microbiol. Lett.">
        <title>FemA of Staphylococcus aureus: isolation and immunodetection.</title>
        <authorList>
            <person name="Johnson S."/>
            <person name="Krueger D."/>
            <person name="Labischinski H."/>
        </authorList>
    </citation>
    <scope>SUBCELLULAR LOCATION</scope>
    <source>
        <strain>SG511</strain>
    </source>
</reference>
<reference key="3">
    <citation type="journal article" date="2002" name="Structure">
        <title>X-ray crystal structure of Staphylococcus aureus FemA.</title>
        <authorList>
            <person name="Benson T.E."/>
            <person name="Prince D.B."/>
            <person name="Mutchler V.T."/>
            <person name="Curry K.A."/>
            <person name="Ho A.M."/>
            <person name="Sarver R.W."/>
            <person name="Hagadorn J.C."/>
            <person name="Choi G.H."/>
            <person name="Garlick R.L."/>
        </authorList>
    </citation>
    <scope>X-RAY CRYSTALLOGRAPHY (2.1 ANGSTROMS)</scope>
</reference>
<accession>P0A0A5</accession>
<accession>P14304</accession>
<organism>
    <name type="scientific">Staphylococcus aureus</name>
    <dbReference type="NCBI Taxonomy" id="1280"/>
    <lineage>
        <taxon>Bacteria</taxon>
        <taxon>Bacillati</taxon>
        <taxon>Bacillota</taxon>
        <taxon>Bacilli</taxon>
        <taxon>Bacillales</taxon>
        <taxon>Staphylococcaceae</taxon>
        <taxon>Staphylococcus</taxon>
    </lineage>
</organism>
<dbReference type="EC" id="2.3.2.17"/>
<dbReference type="EMBL" id="X17688">
    <property type="protein sequence ID" value="CAA35679.1"/>
    <property type="status" value="ALT_INIT"/>
    <property type="molecule type" value="Genomic_DNA"/>
</dbReference>
<dbReference type="PIR" id="S06783">
    <property type="entry name" value="S06783"/>
</dbReference>
<dbReference type="RefSeq" id="WP_000673309.1">
    <property type="nucleotide sequence ID" value="NZ_WWFR01000003.1"/>
</dbReference>
<dbReference type="PDB" id="1LRZ">
    <property type="method" value="X-ray"/>
    <property type="resolution" value="2.10 A"/>
    <property type="chains" value="A=1-420"/>
</dbReference>
<dbReference type="PDBsum" id="1LRZ"/>
<dbReference type="SMR" id="P0A0A5"/>
<dbReference type="OMA" id="YNFLGIM"/>
<dbReference type="BioCyc" id="MetaCyc:MONOMER-15453"/>
<dbReference type="BRENDA" id="2.3.2.17">
    <property type="organism ID" value="3352"/>
</dbReference>
<dbReference type="EvolutionaryTrace" id="P0A0A5"/>
<dbReference type="GO" id="GO:0005737">
    <property type="term" value="C:cytoplasm"/>
    <property type="evidence" value="ECO:0007669"/>
    <property type="project" value="UniProtKB-SubCell"/>
</dbReference>
<dbReference type="GO" id="GO:0016755">
    <property type="term" value="F:aminoacyltransferase activity"/>
    <property type="evidence" value="ECO:0007669"/>
    <property type="project" value="InterPro"/>
</dbReference>
<dbReference type="GO" id="GO:0000166">
    <property type="term" value="F:nucleotide binding"/>
    <property type="evidence" value="ECO:0007669"/>
    <property type="project" value="InterPro"/>
</dbReference>
<dbReference type="GO" id="GO:0071555">
    <property type="term" value="P:cell wall organization"/>
    <property type="evidence" value="ECO:0007669"/>
    <property type="project" value="UniProtKB-KW"/>
</dbReference>
<dbReference type="GO" id="GO:0009252">
    <property type="term" value="P:peptidoglycan biosynthetic process"/>
    <property type="evidence" value="ECO:0007669"/>
    <property type="project" value="UniProtKB-KW"/>
</dbReference>
<dbReference type="GO" id="GO:0008360">
    <property type="term" value="P:regulation of cell shape"/>
    <property type="evidence" value="ECO:0007669"/>
    <property type="project" value="UniProtKB-KW"/>
</dbReference>
<dbReference type="Gene3D" id="1.20.58.90">
    <property type="match status" value="1"/>
</dbReference>
<dbReference type="Gene3D" id="3.40.630.30">
    <property type="match status" value="2"/>
</dbReference>
<dbReference type="InterPro" id="IPR016181">
    <property type="entry name" value="Acyl_CoA_acyltransferase"/>
</dbReference>
<dbReference type="InterPro" id="IPR003447">
    <property type="entry name" value="FEMABX"/>
</dbReference>
<dbReference type="InterPro" id="IPR050644">
    <property type="entry name" value="PG_Glycine_Bridge_Synth"/>
</dbReference>
<dbReference type="InterPro" id="IPR010978">
    <property type="entry name" value="tRNA-bd_arm"/>
</dbReference>
<dbReference type="PANTHER" id="PTHR36174:SF2">
    <property type="entry name" value="AMINOACYLTRANSFERASE FEMA"/>
    <property type="match status" value="1"/>
</dbReference>
<dbReference type="PANTHER" id="PTHR36174">
    <property type="entry name" value="LIPID II:GLYCINE GLYCYLTRANSFERASE"/>
    <property type="match status" value="1"/>
</dbReference>
<dbReference type="Pfam" id="PF02388">
    <property type="entry name" value="FemAB"/>
    <property type="match status" value="1"/>
</dbReference>
<dbReference type="SUPFAM" id="SSF55729">
    <property type="entry name" value="Acyl-CoA N-acyltransferases (Nat)"/>
    <property type="match status" value="2"/>
</dbReference>
<dbReference type="SUPFAM" id="SSF46589">
    <property type="entry name" value="tRNA-binding arm"/>
    <property type="match status" value="1"/>
</dbReference>
<dbReference type="PROSITE" id="PS51191">
    <property type="entry name" value="FEMABX"/>
    <property type="match status" value="1"/>
</dbReference>
<proteinExistence type="evidence at protein level"/>
<evidence type="ECO:0000250" key="1"/>
<evidence type="ECO:0000269" key="2">
    <source>
    </source>
</evidence>
<evidence type="ECO:0000305" key="3"/>
<evidence type="ECO:0007829" key="4">
    <source>
        <dbReference type="PDB" id="1LRZ"/>
    </source>
</evidence>
<feature type="chain" id="PRO_0000204735" description="Aminoacyltransferase FemA">
    <location>
        <begin position="1"/>
        <end position="420"/>
    </location>
</feature>
<feature type="strand" evidence="4">
    <location>
        <begin position="2"/>
        <end position="5"/>
    </location>
</feature>
<feature type="helix" evidence="4">
    <location>
        <begin position="8"/>
        <end position="16"/>
    </location>
</feature>
<feature type="helix" evidence="4">
    <location>
        <begin position="27"/>
        <end position="35"/>
    </location>
</feature>
<feature type="strand" evidence="4">
    <location>
        <begin position="39"/>
        <end position="46"/>
    </location>
</feature>
<feature type="strand" evidence="4">
    <location>
        <begin position="52"/>
        <end position="63"/>
    </location>
</feature>
<feature type="turn" evidence="4">
    <location>
        <begin position="64"/>
        <end position="66"/>
    </location>
</feature>
<feature type="strand" evidence="4">
    <location>
        <begin position="67"/>
        <end position="71"/>
    </location>
</feature>
<feature type="helix" evidence="4">
    <location>
        <begin position="83"/>
        <end position="98"/>
    </location>
</feature>
<feature type="turn" evidence="4">
    <location>
        <begin position="99"/>
        <end position="101"/>
    </location>
</feature>
<feature type="strand" evidence="4">
    <location>
        <begin position="102"/>
        <end position="107"/>
    </location>
</feature>
<feature type="strand" evidence="4">
    <location>
        <begin position="112"/>
        <end position="116"/>
    </location>
</feature>
<feature type="strand" evidence="4">
    <location>
        <begin position="122"/>
        <end position="125"/>
    </location>
</feature>
<feature type="helix" evidence="4">
    <location>
        <begin position="130"/>
        <end position="137"/>
    </location>
</feature>
<feature type="strand" evidence="4">
    <location>
        <begin position="151"/>
        <end position="153"/>
    </location>
</feature>
<feature type="strand" evidence="4">
    <location>
        <begin position="156"/>
        <end position="162"/>
    </location>
</feature>
<feature type="helix" evidence="4">
    <location>
        <begin position="168"/>
        <end position="173"/>
    </location>
</feature>
<feature type="helix" evidence="4">
    <location>
        <begin position="177"/>
        <end position="187"/>
    </location>
</feature>
<feature type="strand" evidence="4">
    <location>
        <begin position="192"/>
        <end position="195"/>
    </location>
</feature>
<feature type="helix" evidence="4">
    <location>
        <begin position="198"/>
        <end position="200"/>
    </location>
</feature>
<feature type="helix" evidence="4">
    <location>
        <begin position="201"/>
        <end position="207"/>
    </location>
</feature>
<feature type="helix" evidence="4">
    <location>
        <begin position="222"/>
        <end position="232"/>
    </location>
</feature>
<feature type="helix" evidence="4">
    <location>
        <begin position="233"/>
        <end position="235"/>
    </location>
</feature>
<feature type="strand" evidence="4">
    <location>
        <begin position="239"/>
        <end position="244"/>
    </location>
</feature>
<feature type="helix" evidence="4">
    <location>
        <begin position="245"/>
        <end position="272"/>
    </location>
</feature>
<feature type="helix" evidence="4">
    <location>
        <begin position="277"/>
        <end position="307"/>
    </location>
</feature>
<feature type="strand" evidence="4">
    <location>
        <begin position="309"/>
        <end position="320"/>
    </location>
</feature>
<feature type="strand" evidence="4">
    <location>
        <begin position="325"/>
        <end position="332"/>
    </location>
</feature>
<feature type="helix" evidence="4">
    <location>
        <begin position="334"/>
        <end position="339"/>
    </location>
</feature>
<feature type="helix" evidence="4">
    <location>
        <begin position="341"/>
        <end position="355"/>
    </location>
</feature>
<feature type="strand" evidence="4">
    <location>
        <begin position="360"/>
        <end position="365"/>
    </location>
</feature>
<feature type="helix" evidence="4">
    <location>
        <begin position="377"/>
        <end position="384"/>
    </location>
</feature>
<feature type="turn" evidence="4">
    <location>
        <begin position="385"/>
        <end position="387"/>
    </location>
</feature>
<feature type="strand" evidence="4">
    <location>
        <begin position="389"/>
        <end position="393"/>
    </location>
</feature>
<feature type="strand" evidence="4">
    <location>
        <begin position="397"/>
        <end position="402"/>
    </location>
</feature>
<feature type="helix" evidence="4">
    <location>
        <begin position="403"/>
        <end position="411"/>
    </location>
</feature>
<sequence>MKFTNLTAKEFGAFTDSMPYSHFTQTVGHYELKLAEGYETHLVGIKNNNNEVIAACLLTAVPVMKVFKYFYSNRGPVIDYENQELVHFFFNELSKYVKKHRCLYLHIDPYLPYQYLNHDGEITGNAGNDWFFDKMSNLGFEHTGFHKGFDPVLQIRYHSVLDLKDKTADDIIKNMDGLRKRNTKKVKKNGVKVRFLSEEELPIFRSFMEDTSESKAFADRDDKFYYNRLKYYKDRVLVPLAYINFDEYIKELNEERDILNKDLNKALKDIEKRPENKKAHNKRDNLQQQLDANEQKIEEGKRLQEEHGNELPISAGFFFINPFEVVYYAGGTSNAFRHFAGSYAVQWEMINYALNHGIDRYNFYGVSGKFTEDAEDAGVVKFKKGYNAEIIEYVGDFIKPINKPVYAAYTALKKVKDRIF</sequence>
<keyword id="KW-0002">3D-structure</keyword>
<keyword id="KW-0012">Acyltransferase</keyword>
<keyword id="KW-0133">Cell shape</keyword>
<keyword id="KW-0961">Cell wall biogenesis/degradation</keyword>
<keyword id="KW-0963">Cytoplasm</keyword>
<keyword id="KW-0573">Peptidoglycan synthesis</keyword>
<keyword id="KW-0808">Transferase</keyword>
<name>FEMA_STAAU</name>